<proteinExistence type="inferred from homology"/>
<feature type="chain" id="PRO_1000047840" description="Probable septum site-determining protein MinC">
    <location>
        <begin position="1"/>
        <end position="246"/>
    </location>
</feature>
<gene>
    <name evidence="1" type="primary">minC</name>
    <name type="ordered locus">PSPPH_1606</name>
</gene>
<evidence type="ECO:0000255" key="1">
    <source>
        <dbReference type="HAMAP-Rule" id="MF_00267"/>
    </source>
</evidence>
<sequence>MSQIESQNPEPVFQLKGSMLAITVMELARTNLEALDRQLAAKVAQAPNFFSNTPLILALDKLAPNEGPVDLPGLVRICRQHGLRTLAIRANRIEDIAAAIAVDLPVLPPSGARERVIDPIEVEAPKKIPEKPPEPLIKPTRVITAPVRGGQQIYAQGGDLVVVAPVSPGAELLADGNIHVYGPMRGRALAGIKGDTKARIFCQQLSAELISIAGQYKVSEDLRRDPLWGSPVQVSLSGDVLNIIRL</sequence>
<keyword id="KW-0131">Cell cycle</keyword>
<keyword id="KW-0132">Cell division</keyword>
<keyword id="KW-0717">Septation</keyword>
<accession>Q48L73</accession>
<dbReference type="EMBL" id="CP000058">
    <property type="protein sequence ID" value="AAZ34392.1"/>
    <property type="molecule type" value="Genomic_DNA"/>
</dbReference>
<dbReference type="RefSeq" id="WP_002552655.1">
    <property type="nucleotide sequence ID" value="NC_005773.3"/>
</dbReference>
<dbReference type="SMR" id="Q48L73"/>
<dbReference type="GeneID" id="69858558"/>
<dbReference type="KEGG" id="psp:PSPPH_1606"/>
<dbReference type="eggNOG" id="COG0850">
    <property type="taxonomic scope" value="Bacteria"/>
</dbReference>
<dbReference type="HOGENOM" id="CLU_067812_0_1_6"/>
<dbReference type="Proteomes" id="UP000000551">
    <property type="component" value="Chromosome"/>
</dbReference>
<dbReference type="GO" id="GO:0000902">
    <property type="term" value="P:cell morphogenesis"/>
    <property type="evidence" value="ECO:0007669"/>
    <property type="project" value="InterPro"/>
</dbReference>
<dbReference type="GO" id="GO:0000917">
    <property type="term" value="P:division septum assembly"/>
    <property type="evidence" value="ECO:0007669"/>
    <property type="project" value="UniProtKB-KW"/>
</dbReference>
<dbReference type="GO" id="GO:0051302">
    <property type="term" value="P:regulation of cell division"/>
    <property type="evidence" value="ECO:0007669"/>
    <property type="project" value="InterPro"/>
</dbReference>
<dbReference type="GO" id="GO:1901891">
    <property type="term" value="P:regulation of cell septum assembly"/>
    <property type="evidence" value="ECO:0007669"/>
    <property type="project" value="InterPro"/>
</dbReference>
<dbReference type="Gene3D" id="2.160.20.70">
    <property type="match status" value="1"/>
</dbReference>
<dbReference type="Gene3D" id="3.30.70.260">
    <property type="match status" value="1"/>
</dbReference>
<dbReference type="HAMAP" id="MF_00267">
    <property type="entry name" value="MinC"/>
    <property type="match status" value="1"/>
</dbReference>
<dbReference type="InterPro" id="IPR016098">
    <property type="entry name" value="CAP/MinC_C"/>
</dbReference>
<dbReference type="InterPro" id="IPR013033">
    <property type="entry name" value="MinC"/>
</dbReference>
<dbReference type="InterPro" id="IPR036145">
    <property type="entry name" value="MinC_C_sf"/>
</dbReference>
<dbReference type="InterPro" id="IPR007874">
    <property type="entry name" value="MinC_N"/>
</dbReference>
<dbReference type="InterPro" id="IPR005526">
    <property type="entry name" value="Septum_form_inhib_MinC_C"/>
</dbReference>
<dbReference type="NCBIfam" id="TIGR01222">
    <property type="entry name" value="minC"/>
    <property type="match status" value="1"/>
</dbReference>
<dbReference type="PANTHER" id="PTHR34108">
    <property type="entry name" value="SEPTUM SITE-DETERMINING PROTEIN MINC"/>
    <property type="match status" value="1"/>
</dbReference>
<dbReference type="PANTHER" id="PTHR34108:SF1">
    <property type="entry name" value="SEPTUM SITE-DETERMINING PROTEIN MINC"/>
    <property type="match status" value="1"/>
</dbReference>
<dbReference type="Pfam" id="PF03775">
    <property type="entry name" value="MinC_C"/>
    <property type="match status" value="1"/>
</dbReference>
<dbReference type="Pfam" id="PF05209">
    <property type="entry name" value="MinC_N"/>
    <property type="match status" value="1"/>
</dbReference>
<dbReference type="SUPFAM" id="SSF63848">
    <property type="entry name" value="Cell-division inhibitor MinC, C-terminal domain"/>
    <property type="match status" value="1"/>
</dbReference>
<organism>
    <name type="scientific">Pseudomonas savastanoi pv. phaseolicola (strain 1448A / Race 6)</name>
    <name type="common">Pseudomonas syringae pv. phaseolicola (strain 1448A / Race 6)</name>
    <dbReference type="NCBI Taxonomy" id="264730"/>
    <lineage>
        <taxon>Bacteria</taxon>
        <taxon>Pseudomonadati</taxon>
        <taxon>Pseudomonadota</taxon>
        <taxon>Gammaproteobacteria</taxon>
        <taxon>Pseudomonadales</taxon>
        <taxon>Pseudomonadaceae</taxon>
        <taxon>Pseudomonas</taxon>
    </lineage>
</organism>
<name>MINC_PSE14</name>
<protein>
    <recommendedName>
        <fullName evidence="1">Probable septum site-determining protein MinC</fullName>
    </recommendedName>
</protein>
<reference key="1">
    <citation type="journal article" date="2005" name="J. Bacteriol.">
        <title>Whole-genome sequence analysis of Pseudomonas syringae pv. phaseolicola 1448A reveals divergence among pathovars in genes involved in virulence and transposition.</title>
        <authorList>
            <person name="Joardar V."/>
            <person name="Lindeberg M."/>
            <person name="Jackson R.W."/>
            <person name="Selengut J."/>
            <person name="Dodson R."/>
            <person name="Brinkac L.M."/>
            <person name="Daugherty S.C."/>
            <person name="DeBoy R.T."/>
            <person name="Durkin A.S."/>
            <person name="Gwinn Giglio M."/>
            <person name="Madupu R."/>
            <person name="Nelson W.C."/>
            <person name="Rosovitz M.J."/>
            <person name="Sullivan S.A."/>
            <person name="Crabtree J."/>
            <person name="Creasy T."/>
            <person name="Davidsen T.M."/>
            <person name="Haft D.H."/>
            <person name="Zafar N."/>
            <person name="Zhou L."/>
            <person name="Halpin R."/>
            <person name="Holley T."/>
            <person name="Khouri H.M."/>
            <person name="Feldblyum T.V."/>
            <person name="White O."/>
            <person name="Fraser C.M."/>
            <person name="Chatterjee A.K."/>
            <person name="Cartinhour S."/>
            <person name="Schneider D."/>
            <person name="Mansfield J.W."/>
            <person name="Collmer A."/>
            <person name="Buell R."/>
        </authorList>
    </citation>
    <scope>NUCLEOTIDE SEQUENCE [LARGE SCALE GENOMIC DNA]</scope>
    <source>
        <strain>1448A / Race 6</strain>
    </source>
</reference>
<comment type="function">
    <text evidence="1">Cell division inhibitor that blocks the formation of polar Z ring septums. Rapidly oscillates between the poles of the cell to destabilize FtsZ filaments that have formed before they mature into polar Z rings. Prevents FtsZ polymerization.</text>
</comment>
<comment type="subunit">
    <text evidence="1">Interacts with MinD and FtsZ.</text>
</comment>
<comment type="similarity">
    <text evidence="1">Belongs to the MinC family.</text>
</comment>